<sequence>MSIELDLQLAVENEHGLPSEAEFALWLTRTITPFQAQAEVTVRIVDEAESHALNLNYRGKDKPTNVLSFPFEAPSGMEMDLLGDLVICRQVVEREAIEQNKPLQAHWAHMVVHGSLHLLGYDHIEDDEAEEMESLETEIMQEMGFTDPYLAEKE</sequence>
<feature type="chain" id="PRO_0000102562" description="Endoribonuclease YbeY">
    <location>
        <begin position="1"/>
        <end position="154"/>
    </location>
</feature>
<feature type="binding site" evidence="1">
    <location>
        <position position="113"/>
    </location>
    <ligand>
        <name>Zn(2+)</name>
        <dbReference type="ChEBI" id="CHEBI:29105"/>
        <note>catalytic</note>
    </ligand>
</feature>
<feature type="binding site" evidence="1">
    <location>
        <position position="117"/>
    </location>
    <ligand>
        <name>Zn(2+)</name>
        <dbReference type="ChEBI" id="CHEBI:29105"/>
        <note>catalytic</note>
    </ligand>
</feature>
<feature type="binding site" evidence="1">
    <location>
        <position position="123"/>
    </location>
    <ligand>
        <name>Zn(2+)</name>
        <dbReference type="ChEBI" id="CHEBI:29105"/>
        <note>catalytic</note>
    </ligand>
</feature>
<organism>
    <name type="scientific">Vibrio cholerae serotype O1 (strain ATCC 39315 / El Tor Inaba N16961)</name>
    <dbReference type="NCBI Taxonomy" id="243277"/>
    <lineage>
        <taxon>Bacteria</taxon>
        <taxon>Pseudomonadati</taxon>
        <taxon>Pseudomonadota</taxon>
        <taxon>Gammaproteobacteria</taxon>
        <taxon>Vibrionales</taxon>
        <taxon>Vibrionaceae</taxon>
        <taxon>Vibrio</taxon>
    </lineage>
</organism>
<name>YBEY_VIBCH</name>
<reference key="1">
    <citation type="journal article" date="2000" name="Nature">
        <title>DNA sequence of both chromosomes of the cholera pathogen Vibrio cholerae.</title>
        <authorList>
            <person name="Heidelberg J.F."/>
            <person name="Eisen J.A."/>
            <person name="Nelson W.C."/>
            <person name="Clayton R.A."/>
            <person name="Gwinn M.L."/>
            <person name="Dodson R.J."/>
            <person name="Haft D.H."/>
            <person name="Hickey E.K."/>
            <person name="Peterson J.D."/>
            <person name="Umayam L.A."/>
            <person name="Gill S.R."/>
            <person name="Nelson K.E."/>
            <person name="Read T.D."/>
            <person name="Tettelin H."/>
            <person name="Richardson D.L."/>
            <person name="Ermolaeva M.D."/>
            <person name="Vamathevan J.J."/>
            <person name="Bass S."/>
            <person name="Qin H."/>
            <person name="Dragoi I."/>
            <person name="Sellers P."/>
            <person name="McDonald L.A."/>
            <person name="Utterback T.R."/>
            <person name="Fleischmann R.D."/>
            <person name="Nierman W.C."/>
            <person name="White O."/>
            <person name="Salzberg S.L."/>
            <person name="Smith H.O."/>
            <person name="Colwell R.R."/>
            <person name="Mekalanos J.J."/>
            <person name="Venter J.C."/>
            <person name="Fraser C.M."/>
        </authorList>
    </citation>
    <scope>NUCLEOTIDE SEQUENCE [LARGE SCALE GENOMIC DNA]</scope>
    <source>
        <strain>ATCC 39315 / El Tor Inaba N16961</strain>
    </source>
</reference>
<evidence type="ECO:0000255" key="1">
    <source>
        <dbReference type="HAMAP-Rule" id="MF_00009"/>
    </source>
</evidence>
<keyword id="KW-0963">Cytoplasm</keyword>
<keyword id="KW-0255">Endonuclease</keyword>
<keyword id="KW-0378">Hydrolase</keyword>
<keyword id="KW-0479">Metal-binding</keyword>
<keyword id="KW-0540">Nuclease</keyword>
<keyword id="KW-1185">Reference proteome</keyword>
<keyword id="KW-0690">Ribosome biogenesis</keyword>
<keyword id="KW-0698">rRNA processing</keyword>
<keyword id="KW-0862">Zinc</keyword>
<proteinExistence type="inferred from homology"/>
<protein>
    <recommendedName>
        <fullName evidence="1">Endoribonuclease YbeY</fullName>
        <ecNumber evidence="1">3.1.-.-</ecNumber>
    </recommendedName>
</protein>
<comment type="function">
    <text evidence="1">Single strand-specific metallo-endoribonuclease involved in late-stage 70S ribosome quality control and in maturation of the 3' terminus of the 16S rRNA.</text>
</comment>
<comment type="cofactor">
    <cofactor evidence="1">
        <name>Zn(2+)</name>
        <dbReference type="ChEBI" id="CHEBI:29105"/>
    </cofactor>
    <text evidence="1">Binds 1 zinc ion.</text>
</comment>
<comment type="subcellular location">
    <subcellularLocation>
        <location evidence="1">Cytoplasm</location>
    </subcellularLocation>
</comment>
<comment type="similarity">
    <text evidence="1">Belongs to the endoribonuclease YbeY family.</text>
</comment>
<accession>Q9KTE2</accession>
<dbReference type="EC" id="3.1.-.-" evidence="1"/>
<dbReference type="EMBL" id="AE003852">
    <property type="protein sequence ID" value="AAF94122.1"/>
    <property type="molecule type" value="Genomic_DNA"/>
</dbReference>
<dbReference type="PIR" id="C82261">
    <property type="entry name" value="C82261"/>
</dbReference>
<dbReference type="RefSeq" id="NP_230607.1">
    <property type="nucleotide sequence ID" value="NC_002505.1"/>
</dbReference>
<dbReference type="RefSeq" id="WP_000021208.1">
    <property type="nucleotide sequence ID" value="NZ_LT906614.1"/>
</dbReference>
<dbReference type="SMR" id="Q9KTE2"/>
<dbReference type="STRING" id="243277.VC_0960"/>
<dbReference type="DNASU" id="2614213"/>
<dbReference type="EnsemblBacteria" id="AAF94122">
    <property type="protein sequence ID" value="AAF94122"/>
    <property type="gene ID" value="VC_0960"/>
</dbReference>
<dbReference type="KEGG" id="vch:VC_0960"/>
<dbReference type="PATRIC" id="fig|243277.26.peg.914"/>
<dbReference type="eggNOG" id="COG0319">
    <property type="taxonomic scope" value="Bacteria"/>
</dbReference>
<dbReference type="HOGENOM" id="CLU_106710_0_1_6"/>
<dbReference type="PHI-base" id="PHI:3059"/>
<dbReference type="Proteomes" id="UP000000584">
    <property type="component" value="Chromosome 1"/>
</dbReference>
<dbReference type="GO" id="GO:0005737">
    <property type="term" value="C:cytoplasm"/>
    <property type="evidence" value="ECO:0007669"/>
    <property type="project" value="UniProtKB-SubCell"/>
</dbReference>
<dbReference type="GO" id="GO:0004222">
    <property type="term" value="F:metalloendopeptidase activity"/>
    <property type="evidence" value="ECO:0007669"/>
    <property type="project" value="InterPro"/>
</dbReference>
<dbReference type="GO" id="GO:0004521">
    <property type="term" value="F:RNA endonuclease activity"/>
    <property type="evidence" value="ECO:0007669"/>
    <property type="project" value="UniProtKB-UniRule"/>
</dbReference>
<dbReference type="GO" id="GO:0008270">
    <property type="term" value="F:zinc ion binding"/>
    <property type="evidence" value="ECO:0007669"/>
    <property type="project" value="UniProtKB-UniRule"/>
</dbReference>
<dbReference type="GO" id="GO:0006364">
    <property type="term" value="P:rRNA processing"/>
    <property type="evidence" value="ECO:0007669"/>
    <property type="project" value="UniProtKB-UniRule"/>
</dbReference>
<dbReference type="Gene3D" id="3.40.390.30">
    <property type="entry name" value="Metalloproteases ('zincins'), catalytic domain"/>
    <property type="match status" value="1"/>
</dbReference>
<dbReference type="HAMAP" id="MF_00009">
    <property type="entry name" value="Endoribonucl_YbeY"/>
    <property type="match status" value="1"/>
</dbReference>
<dbReference type="InterPro" id="IPR023091">
    <property type="entry name" value="MetalPrtase_cat_dom_sf_prd"/>
</dbReference>
<dbReference type="InterPro" id="IPR002036">
    <property type="entry name" value="YbeY"/>
</dbReference>
<dbReference type="InterPro" id="IPR020549">
    <property type="entry name" value="YbeY_CS"/>
</dbReference>
<dbReference type="NCBIfam" id="TIGR00043">
    <property type="entry name" value="rRNA maturation RNase YbeY"/>
    <property type="match status" value="1"/>
</dbReference>
<dbReference type="PANTHER" id="PTHR46986">
    <property type="entry name" value="ENDORIBONUCLEASE YBEY, CHLOROPLASTIC"/>
    <property type="match status" value="1"/>
</dbReference>
<dbReference type="PANTHER" id="PTHR46986:SF1">
    <property type="entry name" value="ENDORIBONUCLEASE YBEY, CHLOROPLASTIC"/>
    <property type="match status" value="1"/>
</dbReference>
<dbReference type="Pfam" id="PF02130">
    <property type="entry name" value="YbeY"/>
    <property type="match status" value="1"/>
</dbReference>
<dbReference type="SUPFAM" id="SSF55486">
    <property type="entry name" value="Metalloproteases ('zincins'), catalytic domain"/>
    <property type="match status" value="1"/>
</dbReference>
<dbReference type="PROSITE" id="PS01306">
    <property type="entry name" value="UPF0054"/>
    <property type="match status" value="1"/>
</dbReference>
<gene>
    <name evidence="1" type="primary">ybeY</name>
    <name type="ordered locus">VC_0960</name>
</gene>